<gene>
    <name evidence="1" type="primary">leuD</name>
    <name type="ordered locus">Lcho_1676</name>
</gene>
<sequence length="215" mass="24299">MQAFTVHKGLVAPMDRANVDTDAIIPKQFLKSIQRSGFGPNLFDEWRYLDKGEPGQESVVRKPNPDFVLNQPRYQGASILLTRENFGCGSSREHAPWALGQYGFRVLIAPSFADIFFNNCFKNGILPIVLPESVVARLFDEVHGFVGYQLTIDLPRQVVIKADGTELPFEVQAFRKYCLVNGFDDIGLTLRHADKIKAFEAERLAKMPWLGQRLL</sequence>
<comment type="function">
    <text evidence="1">Catalyzes the isomerization between 2-isopropylmalate and 3-isopropylmalate, via the formation of 2-isopropylmaleate.</text>
</comment>
<comment type="catalytic activity">
    <reaction evidence="1">
        <text>(2R,3S)-3-isopropylmalate = (2S)-2-isopropylmalate</text>
        <dbReference type="Rhea" id="RHEA:32287"/>
        <dbReference type="ChEBI" id="CHEBI:1178"/>
        <dbReference type="ChEBI" id="CHEBI:35121"/>
        <dbReference type="EC" id="4.2.1.33"/>
    </reaction>
</comment>
<comment type="pathway">
    <text evidence="1">Amino-acid biosynthesis; L-leucine biosynthesis; L-leucine from 3-methyl-2-oxobutanoate: step 2/4.</text>
</comment>
<comment type="subunit">
    <text evidence="1">Heterodimer of LeuC and LeuD.</text>
</comment>
<comment type="similarity">
    <text evidence="1">Belongs to the LeuD family. LeuD type 1 subfamily.</text>
</comment>
<feature type="chain" id="PRO_1000135814" description="3-isopropylmalate dehydratase small subunit">
    <location>
        <begin position="1"/>
        <end position="215"/>
    </location>
</feature>
<organism>
    <name type="scientific">Leptothrix cholodnii (strain ATCC 51168 / LMG 8142 / SP-6)</name>
    <name type="common">Leptothrix discophora (strain SP-6)</name>
    <dbReference type="NCBI Taxonomy" id="395495"/>
    <lineage>
        <taxon>Bacteria</taxon>
        <taxon>Pseudomonadati</taxon>
        <taxon>Pseudomonadota</taxon>
        <taxon>Betaproteobacteria</taxon>
        <taxon>Burkholderiales</taxon>
        <taxon>Sphaerotilaceae</taxon>
        <taxon>Leptothrix</taxon>
    </lineage>
</organism>
<protein>
    <recommendedName>
        <fullName evidence="1">3-isopropylmalate dehydratase small subunit</fullName>
        <ecNumber evidence="1">4.2.1.33</ecNumber>
    </recommendedName>
    <alternativeName>
        <fullName evidence="1">Alpha-IPM isomerase</fullName>
        <shortName evidence="1">IPMI</shortName>
    </alternativeName>
    <alternativeName>
        <fullName evidence="1">Isopropylmalate isomerase</fullName>
    </alternativeName>
</protein>
<proteinExistence type="inferred from homology"/>
<reference key="1">
    <citation type="submission" date="2008-03" db="EMBL/GenBank/DDBJ databases">
        <title>Complete sequence of Leptothrix cholodnii SP-6.</title>
        <authorList>
            <consortium name="US DOE Joint Genome Institute"/>
            <person name="Copeland A."/>
            <person name="Lucas S."/>
            <person name="Lapidus A."/>
            <person name="Glavina del Rio T."/>
            <person name="Dalin E."/>
            <person name="Tice H."/>
            <person name="Bruce D."/>
            <person name="Goodwin L."/>
            <person name="Pitluck S."/>
            <person name="Chertkov O."/>
            <person name="Brettin T."/>
            <person name="Detter J.C."/>
            <person name="Han C."/>
            <person name="Kuske C.R."/>
            <person name="Schmutz J."/>
            <person name="Larimer F."/>
            <person name="Land M."/>
            <person name="Hauser L."/>
            <person name="Kyrpides N."/>
            <person name="Lykidis A."/>
            <person name="Emerson D."/>
            <person name="Richardson P."/>
        </authorList>
    </citation>
    <scope>NUCLEOTIDE SEQUENCE [LARGE SCALE GENOMIC DNA]</scope>
    <source>
        <strain>ATCC 51168 / LMG 8142 / SP-6</strain>
    </source>
</reference>
<accession>B1XY42</accession>
<name>LEUD_LEPCP</name>
<evidence type="ECO:0000255" key="1">
    <source>
        <dbReference type="HAMAP-Rule" id="MF_01031"/>
    </source>
</evidence>
<keyword id="KW-0028">Amino-acid biosynthesis</keyword>
<keyword id="KW-0100">Branched-chain amino acid biosynthesis</keyword>
<keyword id="KW-0432">Leucine biosynthesis</keyword>
<keyword id="KW-0456">Lyase</keyword>
<keyword id="KW-1185">Reference proteome</keyword>
<dbReference type="EC" id="4.2.1.33" evidence="1"/>
<dbReference type="EMBL" id="CP001013">
    <property type="protein sequence ID" value="ACB33943.1"/>
    <property type="molecule type" value="Genomic_DNA"/>
</dbReference>
<dbReference type="RefSeq" id="WP_012346704.1">
    <property type="nucleotide sequence ID" value="NC_010524.1"/>
</dbReference>
<dbReference type="SMR" id="B1XY42"/>
<dbReference type="STRING" id="395495.Lcho_1676"/>
<dbReference type="KEGG" id="lch:Lcho_1676"/>
<dbReference type="eggNOG" id="COG0066">
    <property type="taxonomic scope" value="Bacteria"/>
</dbReference>
<dbReference type="HOGENOM" id="CLU_081378_0_3_4"/>
<dbReference type="OrthoDB" id="9777465at2"/>
<dbReference type="UniPathway" id="UPA00048">
    <property type="reaction ID" value="UER00071"/>
</dbReference>
<dbReference type="Proteomes" id="UP000001693">
    <property type="component" value="Chromosome"/>
</dbReference>
<dbReference type="GO" id="GO:0009316">
    <property type="term" value="C:3-isopropylmalate dehydratase complex"/>
    <property type="evidence" value="ECO:0007669"/>
    <property type="project" value="InterPro"/>
</dbReference>
<dbReference type="GO" id="GO:0003861">
    <property type="term" value="F:3-isopropylmalate dehydratase activity"/>
    <property type="evidence" value="ECO:0007669"/>
    <property type="project" value="UniProtKB-UniRule"/>
</dbReference>
<dbReference type="GO" id="GO:0009098">
    <property type="term" value="P:L-leucine biosynthetic process"/>
    <property type="evidence" value="ECO:0007669"/>
    <property type="project" value="UniProtKB-UniRule"/>
</dbReference>
<dbReference type="CDD" id="cd01577">
    <property type="entry name" value="IPMI_Swivel"/>
    <property type="match status" value="1"/>
</dbReference>
<dbReference type="FunFam" id="3.20.19.10:FF:000003">
    <property type="entry name" value="3-isopropylmalate dehydratase small subunit"/>
    <property type="match status" value="1"/>
</dbReference>
<dbReference type="Gene3D" id="3.20.19.10">
    <property type="entry name" value="Aconitase, domain 4"/>
    <property type="match status" value="1"/>
</dbReference>
<dbReference type="HAMAP" id="MF_01031">
    <property type="entry name" value="LeuD_type1"/>
    <property type="match status" value="1"/>
</dbReference>
<dbReference type="InterPro" id="IPR004431">
    <property type="entry name" value="3-IsopropMal_deHydase_ssu"/>
</dbReference>
<dbReference type="InterPro" id="IPR015928">
    <property type="entry name" value="Aconitase/3IPM_dehydase_swvl"/>
</dbReference>
<dbReference type="InterPro" id="IPR000573">
    <property type="entry name" value="AconitaseA/IPMdHydase_ssu_swvl"/>
</dbReference>
<dbReference type="InterPro" id="IPR033940">
    <property type="entry name" value="IPMI_Swivel"/>
</dbReference>
<dbReference type="InterPro" id="IPR050075">
    <property type="entry name" value="LeuD"/>
</dbReference>
<dbReference type="NCBIfam" id="TIGR00171">
    <property type="entry name" value="leuD"/>
    <property type="match status" value="1"/>
</dbReference>
<dbReference type="NCBIfam" id="NF002458">
    <property type="entry name" value="PRK01641.1"/>
    <property type="match status" value="1"/>
</dbReference>
<dbReference type="PANTHER" id="PTHR43345:SF5">
    <property type="entry name" value="3-ISOPROPYLMALATE DEHYDRATASE SMALL SUBUNIT"/>
    <property type="match status" value="1"/>
</dbReference>
<dbReference type="PANTHER" id="PTHR43345">
    <property type="entry name" value="3-ISOPROPYLMALATE DEHYDRATASE SMALL SUBUNIT 2-RELATED-RELATED"/>
    <property type="match status" value="1"/>
</dbReference>
<dbReference type="Pfam" id="PF00694">
    <property type="entry name" value="Aconitase_C"/>
    <property type="match status" value="1"/>
</dbReference>
<dbReference type="SUPFAM" id="SSF52016">
    <property type="entry name" value="LeuD/IlvD-like"/>
    <property type="match status" value="1"/>
</dbReference>